<organism>
    <name type="scientific">Alkalihalophilus pseudofirmus (strain ATCC BAA-2126 / JCM 17055 / OF4)</name>
    <name type="common">Bacillus pseudofirmus</name>
    <dbReference type="NCBI Taxonomy" id="398511"/>
    <lineage>
        <taxon>Bacteria</taxon>
        <taxon>Bacillati</taxon>
        <taxon>Bacillota</taxon>
        <taxon>Bacilli</taxon>
        <taxon>Bacillales</taxon>
        <taxon>Bacillaceae</taxon>
        <taxon>Alkalihalophilus</taxon>
    </lineage>
</organism>
<accession>Q04441</accession>
<accession>D3FU50</accession>
<keyword id="KW-1003">Cell membrane</keyword>
<keyword id="KW-0186">Copper</keyword>
<keyword id="KW-0903">Direct protein sequencing</keyword>
<keyword id="KW-0249">Electron transport</keyword>
<keyword id="KW-0349">Heme</keyword>
<keyword id="KW-0408">Iron</keyword>
<keyword id="KW-0449">Lipoprotein</keyword>
<keyword id="KW-0472">Membrane</keyword>
<keyword id="KW-0479">Metal-binding</keyword>
<keyword id="KW-0564">Palmitate</keyword>
<keyword id="KW-1185">Reference proteome</keyword>
<keyword id="KW-0679">Respiratory chain</keyword>
<keyword id="KW-0732">Signal</keyword>
<keyword id="KW-1278">Translocase</keyword>
<keyword id="KW-0812">Transmembrane</keyword>
<keyword id="KW-1133">Transmembrane helix</keyword>
<keyword id="KW-0813">Transport</keyword>
<protein>
    <recommendedName>
        <fullName>Cytochrome c oxidase subunit 2</fullName>
        <ecNumber>7.1.1.9</ecNumber>
    </recommendedName>
    <alternativeName>
        <fullName>Cytochrome aa3 subunit 2</fullName>
    </alternativeName>
    <alternativeName>
        <fullName>Cytochrome c oxidase polypeptide II</fullName>
    </alternativeName>
    <alternativeName>
        <fullName>Oxidase aa(3) subunit 2</fullName>
    </alternativeName>
</protein>
<name>COX2_ALKPO</name>
<gene>
    <name type="primary">ctaC</name>
    <name type="ordered locus">BpOF4_00915</name>
</gene>
<reference key="1">
    <citation type="journal article" date="1993" name="J. Biol. Chem.">
        <title>Cloning of the cta operon from alkaliphilic Bacillus firmus OF4 and characterization of the pH-regulated cytochrome caa3 oxidase it encodes.</title>
        <authorList>
            <person name="Quirk P.G."/>
            <person name="Hicks D.B."/>
            <person name="Krulwich T.A."/>
        </authorList>
    </citation>
    <scope>NUCLEOTIDE SEQUENCE [GENOMIC DNA]</scope>
    <scope>PROTEIN SEQUENCE OF 23-48</scope>
</reference>
<reference key="2">
    <citation type="journal article" date="2011" name="Environ. Microbiol.">
        <title>Genome of alkaliphilic Bacillus pseudofirmus OF4 reveals adaptations that support the ability to grow in an external pH range from 7.5 to 11.4.</title>
        <authorList>
            <person name="Janto B."/>
            <person name="Ahmed A."/>
            <person name="Ito M."/>
            <person name="Liu J."/>
            <person name="Hicks D.B."/>
            <person name="Pagni S."/>
            <person name="Fackelmayer O.J."/>
            <person name="Smith T.A."/>
            <person name="Earl J."/>
            <person name="Elbourne L.D."/>
            <person name="Hassan K."/>
            <person name="Paulsen I.T."/>
            <person name="Kolsto A.B."/>
            <person name="Tourasse N.J."/>
            <person name="Ehrlich G.D."/>
            <person name="Boissy R."/>
            <person name="Ivey D.M."/>
            <person name="Li G."/>
            <person name="Xue Y."/>
            <person name="Ma Y."/>
            <person name="Hu F.Z."/>
            <person name="Krulwich T.A."/>
        </authorList>
    </citation>
    <scope>NUCLEOTIDE SEQUENCE [LARGE SCALE GENOMIC DNA]</scope>
    <source>
        <strain>ATCC BAA-2126 / JCM 17055 / OF4</strain>
    </source>
</reference>
<sequence>MKLWKTASRFLPLSFLTLFLTGCLGEENLTALDPKGPQAQWIYDNMILSIIVMALVSIVVFAIFFIILAKYRRKPGDDEIPKQVHGNTALEITWTVIPIILLVILAVPTITGTFMFADKDPDPEVGDNTVYIKVTGHQFWWQFDYENEGFTAGQDVYIPVGEKVIFELHAQDVLHSFWVPALGGKIDTVPGITNHMWLEADEPGVFKGKCAELCGPSHALMDFKLIALERDEYDAWVEGMSAEVEEPTETLANQGRQVFEENSCIGCHAVGGTGTAAGPAFTNFGEREVIAGYLENNDENLEAWIRDPQSLKQGNVMPAYPDMSEEDMEALIAYLRSLKVME</sequence>
<comment type="function">
    <text>Subunits I and II form the functional core of the enzyme complex. Electrons originating in cytochrome c are transferred via heme a and Cu(A) to the binuclear center formed by heme a3 and Cu(B).</text>
</comment>
<comment type="catalytic activity">
    <reaction>
        <text>4 Fe(II)-[cytochrome c] + O2 + 8 H(+)(in) = 4 Fe(III)-[cytochrome c] + 2 H2O + 4 H(+)(out)</text>
        <dbReference type="Rhea" id="RHEA:11436"/>
        <dbReference type="Rhea" id="RHEA-COMP:10350"/>
        <dbReference type="Rhea" id="RHEA-COMP:14399"/>
        <dbReference type="ChEBI" id="CHEBI:15377"/>
        <dbReference type="ChEBI" id="CHEBI:15378"/>
        <dbReference type="ChEBI" id="CHEBI:15379"/>
        <dbReference type="ChEBI" id="CHEBI:29033"/>
        <dbReference type="ChEBI" id="CHEBI:29034"/>
        <dbReference type="EC" id="7.1.1.9"/>
    </reaction>
</comment>
<comment type="cofactor">
    <cofactor>
        <name>Cu cation</name>
        <dbReference type="ChEBI" id="CHEBI:23378"/>
    </cofactor>
    <text>Binds a copper A center.</text>
</comment>
<comment type="cofactor">
    <cofactor>
        <name>heme c</name>
        <dbReference type="ChEBI" id="CHEBI:61717"/>
    </cofactor>
</comment>
<comment type="subcellular location">
    <subcellularLocation>
        <location>Cell membrane</location>
        <topology>Multi-pass membrane protein</topology>
    </subcellularLocation>
</comment>
<comment type="similarity">
    <text evidence="5">Belongs to the cytochrome c oxidase subunit 2 family.</text>
</comment>
<dbReference type="EC" id="7.1.1.9"/>
<dbReference type="EMBL" id="M94110">
    <property type="protein sequence ID" value="AAA22364.1"/>
    <property type="molecule type" value="Genomic_DNA"/>
</dbReference>
<dbReference type="EMBL" id="CP001878">
    <property type="protein sequence ID" value="ADC48252.1"/>
    <property type="molecule type" value="Genomic_DNA"/>
</dbReference>
<dbReference type="RefSeq" id="WP_012959534.1">
    <property type="nucleotide sequence ID" value="NC_013791.2"/>
</dbReference>
<dbReference type="SMR" id="Q04441"/>
<dbReference type="STRING" id="398511.BpOF4_00915"/>
<dbReference type="KEGG" id="bpf:BpOF4_00915"/>
<dbReference type="eggNOG" id="COG1622">
    <property type="taxonomic scope" value="Bacteria"/>
</dbReference>
<dbReference type="eggNOG" id="COG2010">
    <property type="taxonomic scope" value="Bacteria"/>
</dbReference>
<dbReference type="HOGENOM" id="CLU_036876_1_1_9"/>
<dbReference type="Proteomes" id="UP000001544">
    <property type="component" value="Chromosome"/>
</dbReference>
<dbReference type="GO" id="GO:0005886">
    <property type="term" value="C:plasma membrane"/>
    <property type="evidence" value="ECO:0007669"/>
    <property type="project" value="UniProtKB-SubCell"/>
</dbReference>
<dbReference type="GO" id="GO:0005507">
    <property type="term" value="F:copper ion binding"/>
    <property type="evidence" value="ECO:0007669"/>
    <property type="project" value="InterPro"/>
</dbReference>
<dbReference type="GO" id="GO:0004129">
    <property type="term" value="F:cytochrome-c oxidase activity"/>
    <property type="evidence" value="ECO:0007669"/>
    <property type="project" value="UniProtKB-EC"/>
</dbReference>
<dbReference type="GO" id="GO:0020037">
    <property type="term" value="F:heme binding"/>
    <property type="evidence" value="ECO:0007669"/>
    <property type="project" value="InterPro"/>
</dbReference>
<dbReference type="GO" id="GO:0042773">
    <property type="term" value="P:ATP synthesis coupled electron transport"/>
    <property type="evidence" value="ECO:0007669"/>
    <property type="project" value="TreeGrafter"/>
</dbReference>
<dbReference type="CDD" id="cd04213">
    <property type="entry name" value="CuRO_CcO_Caa3_II"/>
    <property type="match status" value="1"/>
</dbReference>
<dbReference type="Gene3D" id="1.10.287.90">
    <property type="match status" value="1"/>
</dbReference>
<dbReference type="Gene3D" id="2.60.40.420">
    <property type="entry name" value="Cupredoxins - blue copper proteins"/>
    <property type="match status" value="1"/>
</dbReference>
<dbReference type="InterPro" id="IPR045187">
    <property type="entry name" value="CcO_II"/>
</dbReference>
<dbReference type="InterPro" id="IPR002429">
    <property type="entry name" value="CcO_II-like_C"/>
</dbReference>
<dbReference type="InterPro" id="IPR001505">
    <property type="entry name" value="Copper_CuA"/>
</dbReference>
<dbReference type="InterPro" id="IPR008972">
    <property type="entry name" value="Cupredoxin"/>
</dbReference>
<dbReference type="InterPro" id="IPR034236">
    <property type="entry name" value="CuRO_CcO_Caa3_II"/>
</dbReference>
<dbReference type="InterPro" id="IPR009056">
    <property type="entry name" value="Cyt_c-like_dom"/>
</dbReference>
<dbReference type="InterPro" id="IPR036909">
    <property type="entry name" value="Cyt_c-like_dom_sf"/>
</dbReference>
<dbReference type="InterPro" id="IPR014222">
    <property type="entry name" value="Cyt_c_oxidase_su2"/>
</dbReference>
<dbReference type="InterPro" id="IPR011759">
    <property type="entry name" value="Cyt_c_oxidase_su2_TM_dom"/>
</dbReference>
<dbReference type="InterPro" id="IPR036257">
    <property type="entry name" value="Cyt_c_oxidase_su2_TM_sf"/>
</dbReference>
<dbReference type="NCBIfam" id="TIGR02866">
    <property type="entry name" value="CoxB"/>
    <property type="match status" value="1"/>
</dbReference>
<dbReference type="PANTHER" id="PTHR22888:SF10">
    <property type="entry name" value="CYTOCHROME C OXIDASE SUBUNIT 2"/>
    <property type="match status" value="1"/>
</dbReference>
<dbReference type="PANTHER" id="PTHR22888">
    <property type="entry name" value="CYTOCHROME C OXIDASE, SUBUNIT II"/>
    <property type="match status" value="1"/>
</dbReference>
<dbReference type="Pfam" id="PF00116">
    <property type="entry name" value="COX2"/>
    <property type="match status" value="1"/>
</dbReference>
<dbReference type="Pfam" id="PF02790">
    <property type="entry name" value="COX2_TM"/>
    <property type="match status" value="1"/>
</dbReference>
<dbReference type="Pfam" id="PF00034">
    <property type="entry name" value="Cytochrom_C"/>
    <property type="match status" value="1"/>
</dbReference>
<dbReference type="PRINTS" id="PR01166">
    <property type="entry name" value="CYCOXIDASEII"/>
</dbReference>
<dbReference type="SUPFAM" id="SSF49503">
    <property type="entry name" value="Cupredoxins"/>
    <property type="match status" value="1"/>
</dbReference>
<dbReference type="SUPFAM" id="SSF46626">
    <property type="entry name" value="Cytochrome c"/>
    <property type="match status" value="1"/>
</dbReference>
<dbReference type="SUPFAM" id="SSF81464">
    <property type="entry name" value="Cytochrome c oxidase subunit II-like, transmembrane region"/>
    <property type="match status" value="1"/>
</dbReference>
<dbReference type="PROSITE" id="PS00078">
    <property type="entry name" value="COX2"/>
    <property type="match status" value="1"/>
</dbReference>
<dbReference type="PROSITE" id="PS50857">
    <property type="entry name" value="COX2_CUA"/>
    <property type="match status" value="1"/>
</dbReference>
<dbReference type="PROSITE" id="PS50999">
    <property type="entry name" value="COX2_TM"/>
    <property type="match status" value="1"/>
</dbReference>
<dbReference type="PROSITE" id="PS51007">
    <property type="entry name" value="CYTC"/>
    <property type="match status" value="1"/>
</dbReference>
<dbReference type="PROSITE" id="PS51257">
    <property type="entry name" value="PROKAR_LIPOPROTEIN"/>
    <property type="match status" value="1"/>
</dbReference>
<proteinExistence type="evidence at protein level"/>
<feature type="signal peptide" evidence="2 4">
    <location>
        <begin position="1"/>
        <end position="22"/>
    </location>
</feature>
<feature type="chain" id="PRO_0000006049" description="Cytochrome c oxidase subunit 2">
    <location>
        <begin position="23"/>
        <end position="342"/>
    </location>
</feature>
<feature type="topological domain" description="Extracellular" evidence="1">
    <location>
        <begin position="23"/>
        <end position="50"/>
    </location>
</feature>
<feature type="transmembrane region" description="Helical" evidence="1">
    <location>
        <begin position="51"/>
        <end position="69"/>
    </location>
</feature>
<feature type="topological domain" description="Cytoplasmic" evidence="1">
    <location>
        <begin position="70"/>
        <end position="89"/>
    </location>
</feature>
<feature type="transmembrane region" description="Helical" evidence="1">
    <location>
        <begin position="90"/>
        <end position="108"/>
    </location>
</feature>
<feature type="topological domain" description="Extracellular" evidence="1">
    <location>
        <begin position="109"/>
        <end position="342"/>
    </location>
</feature>
<feature type="domain" description="Cytochrome c" evidence="3">
    <location>
        <begin position="250"/>
        <end position="342"/>
    </location>
</feature>
<feature type="region of interest" description="Cytochrome c oxidase subunit II">
    <location>
        <begin position="23"/>
        <end position="249"/>
    </location>
</feature>
<feature type="binding site" evidence="5">
    <location>
        <position position="175"/>
    </location>
    <ligand>
        <name>Cu cation</name>
        <dbReference type="ChEBI" id="CHEBI:23378"/>
        <label>A</label>
    </ligand>
</feature>
<feature type="binding site" evidence="5">
    <location>
        <position position="210"/>
    </location>
    <ligand>
        <name>Cu cation</name>
        <dbReference type="ChEBI" id="CHEBI:23378"/>
        <label>A</label>
    </ligand>
</feature>
<feature type="binding site" evidence="5">
    <location>
        <position position="214"/>
    </location>
    <ligand>
        <name>Cu cation</name>
        <dbReference type="ChEBI" id="CHEBI:23378"/>
        <label>A</label>
    </ligand>
</feature>
<feature type="binding site" evidence="5">
    <location>
        <position position="218"/>
    </location>
    <ligand>
        <name>Cu cation</name>
        <dbReference type="ChEBI" id="CHEBI:23378"/>
        <label>A</label>
    </ligand>
</feature>
<feature type="binding site" description="covalent" evidence="5">
    <location>
        <position position="264"/>
    </location>
    <ligand>
        <name>heme c</name>
        <dbReference type="ChEBI" id="CHEBI:61717"/>
    </ligand>
</feature>
<feature type="binding site" description="covalent" evidence="5">
    <location>
        <position position="267"/>
    </location>
    <ligand>
        <name>heme c</name>
        <dbReference type="ChEBI" id="CHEBI:61717"/>
    </ligand>
</feature>
<feature type="binding site" description="axial binding residue" evidence="5">
    <location>
        <position position="268"/>
    </location>
    <ligand>
        <name>heme c</name>
        <dbReference type="ChEBI" id="CHEBI:61717"/>
    </ligand>
    <ligandPart>
        <name>Fe</name>
        <dbReference type="ChEBI" id="CHEBI:18248"/>
    </ligandPart>
</feature>
<feature type="binding site" description="axial binding residue" evidence="5">
    <location>
        <position position="317"/>
    </location>
    <ligand>
        <name>heme c</name>
        <dbReference type="ChEBI" id="CHEBI:61717"/>
    </ligand>
    <ligandPart>
        <name>Fe</name>
        <dbReference type="ChEBI" id="CHEBI:18248"/>
    </ligandPart>
</feature>
<feature type="lipid moiety-binding region" description="N-palmitoyl cysteine" evidence="2">
    <location>
        <position position="23"/>
    </location>
</feature>
<feature type="lipid moiety-binding region" description="S-diacylglycerol cysteine" evidence="2">
    <location>
        <position position="23"/>
    </location>
</feature>
<evidence type="ECO:0000255" key="1"/>
<evidence type="ECO:0000255" key="2">
    <source>
        <dbReference type="PROSITE-ProRule" id="PRU00303"/>
    </source>
</evidence>
<evidence type="ECO:0000255" key="3">
    <source>
        <dbReference type="PROSITE-ProRule" id="PRU00433"/>
    </source>
</evidence>
<evidence type="ECO:0000269" key="4">
    <source>
    </source>
</evidence>
<evidence type="ECO:0000305" key="5"/>